<feature type="signal peptide" evidence="2">
    <location>
        <begin position="1"/>
        <end position="23"/>
    </location>
</feature>
<feature type="chain" id="PRO_0000289646" description="WAP four-disulfide core domain protein 12">
    <location>
        <begin position="24"/>
        <end position="111"/>
    </location>
</feature>
<feature type="domain" description="WAP" evidence="3">
    <location>
        <begin position="27"/>
        <end position="74"/>
    </location>
</feature>
<feature type="region of interest" description="Disordered" evidence="4">
    <location>
        <begin position="80"/>
        <end position="111"/>
    </location>
</feature>
<feature type="disulfide bond" evidence="3">
    <location>
        <begin position="34"/>
        <end position="62"/>
    </location>
</feature>
<feature type="disulfide bond" evidence="3">
    <location>
        <begin position="41"/>
        <end position="66"/>
    </location>
</feature>
<feature type="disulfide bond" evidence="3">
    <location>
        <begin position="49"/>
        <end position="61"/>
    </location>
</feature>
<feature type="disulfide bond" evidence="3">
    <location>
        <begin position="55"/>
        <end position="70"/>
    </location>
</feature>
<dbReference type="EMBL" id="DP000044">
    <property type="protein sequence ID" value="ABO52976.1"/>
    <property type="molecule type" value="Genomic_DNA"/>
</dbReference>
<dbReference type="RefSeq" id="XP_002747632.1">
    <property type="nucleotide sequence ID" value="XM_002747586.2"/>
</dbReference>
<dbReference type="SMR" id="A4K2U1"/>
<dbReference type="FunCoup" id="A4K2U1">
    <property type="interactions" value="1"/>
</dbReference>
<dbReference type="STRING" id="9483.ENSCJAP00000032371"/>
<dbReference type="MEROPS" id="I17.003"/>
<dbReference type="GeneID" id="100407663"/>
<dbReference type="KEGG" id="cjc:100407663"/>
<dbReference type="CTD" id="128488"/>
<dbReference type="eggNOG" id="ENOG502TDXW">
    <property type="taxonomic scope" value="Eukaryota"/>
</dbReference>
<dbReference type="InParanoid" id="A4K2U1"/>
<dbReference type="OrthoDB" id="4473401at2759"/>
<dbReference type="Proteomes" id="UP000008225">
    <property type="component" value="Chromosome 5"/>
</dbReference>
<dbReference type="GO" id="GO:0005576">
    <property type="term" value="C:extracellular region"/>
    <property type="evidence" value="ECO:0007669"/>
    <property type="project" value="UniProtKB-SubCell"/>
</dbReference>
<dbReference type="GO" id="GO:0004867">
    <property type="term" value="F:serine-type endopeptidase inhibitor activity"/>
    <property type="evidence" value="ECO:0007669"/>
    <property type="project" value="UniProtKB-KW"/>
</dbReference>
<dbReference type="GO" id="GO:0042742">
    <property type="term" value="P:defense response to bacterium"/>
    <property type="evidence" value="ECO:0007669"/>
    <property type="project" value="UniProtKB-KW"/>
</dbReference>
<dbReference type="FunFam" id="4.10.75.10:FF:000005">
    <property type="entry name" value="WAP four-disulfide core domain protein 12"/>
    <property type="match status" value="1"/>
</dbReference>
<dbReference type="Gene3D" id="4.10.75.10">
    <property type="entry name" value="Elafin-like"/>
    <property type="match status" value="1"/>
</dbReference>
<dbReference type="InterPro" id="IPR036645">
    <property type="entry name" value="Elafin-like_sf"/>
</dbReference>
<dbReference type="InterPro" id="IPR008197">
    <property type="entry name" value="WAP_dom"/>
</dbReference>
<dbReference type="PANTHER" id="PTHR47769">
    <property type="entry name" value="WAP FOUR-DISULFIDE CORE DOMAIN PROTEIN 8"/>
    <property type="match status" value="1"/>
</dbReference>
<dbReference type="PANTHER" id="PTHR47769:SF1">
    <property type="entry name" value="WAP FOUR-DISULFIDE CORE DOMAIN PROTEIN 8"/>
    <property type="match status" value="1"/>
</dbReference>
<dbReference type="Pfam" id="PF00095">
    <property type="entry name" value="WAP"/>
    <property type="match status" value="1"/>
</dbReference>
<dbReference type="PRINTS" id="PR00003">
    <property type="entry name" value="4DISULPHCORE"/>
</dbReference>
<dbReference type="SMART" id="SM00217">
    <property type="entry name" value="WAP"/>
    <property type="match status" value="1"/>
</dbReference>
<dbReference type="SUPFAM" id="SSF57256">
    <property type="entry name" value="Elafin-like"/>
    <property type="match status" value="1"/>
</dbReference>
<dbReference type="PROSITE" id="PS51390">
    <property type="entry name" value="WAP"/>
    <property type="match status" value="1"/>
</dbReference>
<name>WFD12_CALJA</name>
<organism>
    <name type="scientific">Callithrix jacchus</name>
    <name type="common">White-tufted-ear marmoset</name>
    <dbReference type="NCBI Taxonomy" id="9483"/>
    <lineage>
        <taxon>Eukaryota</taxon>
        <taxon>Metazoa</taxon>
        <taxon>Chordata</taxon>
        <taxon>Craniata</taxon>
        <taxon>Vertebrata</taxon>
        <taxon>Euteleostomi</taxon>
        <taxon>Mammalia</taxon>
        <taxon>Eutheria</taxon>
        <taxon>Euarchontoglires</taxon>
        <taxon>Primates</taxon>
        <taxon>Haplorrhini</taxon>
        <taxon>Platyrrhini</taxon>
        <taxon>Cebidae</taxon>
        <taxon>Callitrichinae</taxon>
        <taxon>Callithrix</taxon>
        <taxon>Callithrix</taxon>
    </lineage>
</organism>
<comment type="function">
    <text evidence="1">Antibacterial protein. Putative acid-stable proteinase inhibitor (By similarity).</text>
</comment>
<comment type="subcellular location">
    <subcellularLocation>
        <location evidence="5">Secreted</location>
    </subcellularLocation>
</comment>
<proteinExistence type="inferred from homology"/>
<gene>
    <name type="primary">WFDC12</name>
</gene>
<reference key="1">
    <citation type="journal article" date="2007" name="Genome Res.">
        <title>Comparative sequence analyses reveal rapid and divergent evolutionary changes of the WFDC locus in the primate lineage.</title>
        <authorList>
            <consortium name="NISC comparative sequencing program"/>
            <person name="Hurle B."/>
            <person name="Swanson W."/>
            <person name="Green E.D."/>
        </authorList>
    </citation>
    <scope>NUCLEOTIDE SEQUENCE [GENOMIC DNA]</scope>
</reference>
<accession>A4K2U1</accession>
<keyword id="KW-0044">Antibiotic</keyword>
<keyword id="KW-0929">Antimicrobial</keyword>
<keyword id="KW-1015">Disulfide bond</keyword>
<keyword id="KW-0646">Protease inhibitor</keyword>
<keyword id="KW-1185">Reference proteome</keyword>
<keyword id="KW-0964">Secreted</keyword>
<keyword id="KW-0722">Serine protease inhibitor</keyword>
<keyword id="KW-0732">Signal</keyword>
<evidence type="ECO:0000250" key="1"/>
<evidence type="ECO:0000255" key="2"/>
<evidence type="ECO:0000255" key="3">
    <source>
        <dbReference type="PROSITE-ProRule" id="PRU00722"/>
    </source>
</evidence>
<evidence type="ECO:0000256" key="4">
    <source>
        <dbReference type="SAM" id="MobiDB-lite"/>
    </source>
</evidence>
<evidence type="ECO:0000305" key="5"/>
<protein>
    <recommendedName>
        <fullName>WAP four-disulfide core domain protein 12</fullName>
    </recommendedName>
</protein>
<sequence length="111" mass="12032">MGSSSFLVLMVSLALVTLVAAEGVKVNIEKPGVCPADNIRCIKSDPPQCHTDQDCQGIRKCCYLHCGFKCVIPVKELEEGGNKDEDVSRPCPEPGWEAKPPGVFSTRCPQK</sequence>